<gene>
    <name evidence="1" type="primary">pheS</name>
    <name type="ordered locus">BQ00770</name>
</gene>
<feature type="chain" id="PRO_0000231965" description="Phenylalanine--tRNA ligase alpha subunit">
    <location>
        <begin position="1"/>
        <end position="361"/>
    </location>
</feature>
<feature type="binding site" evidence="1">
    <location>
        <position position="260"/>
    </location>
    <ligand>
        <name>Mg(2+)</name>
        <dbReference type="ChEBI" id="CHEBI:18420"/>
        <note>shared with beta subunit</note>
    </ligand>
</feature>
<reference key="1">
    <citation type="journal article" date="2004" name="Proc. Natl. Acad. Sci. U.S.A.">
        <title>The louse-borne human pathogen Bartonella quintana is a genomic derivative of the zoonotic agent Bartonella henselae.</title>
        <authorList>
            <person name="Alsmark U.C.M."/>
            <person name="Frank A.C."/>
            <person name="Karlberg E.O."/>
            <person name="Legault B.-A."/>
            <person name="Ardell D.H."/>
            <person name="Canbaeck B."/>
            <person name="Eriksson A.-S."/>
            <person name="Naeslund A.K."/>
            <person name="Handley S.A."/>
            <person name="Huvet M."/>
            <person name="La Scola B."/>
            <person name="Holmberg M."/>
            <person name="Andersson S.G.E."/>
        </authorList>
    </citation>
    <scope>NUCLEOTIDE SEQUENCE [LARGE SCALE GENOMIC DNA]</scope>
    <source>
        <strain>Toulouse</strain>
    </source>
</reference>
<evidence type="ECO:0000255" key="1">
    <source>
        <dbReference type="HAMAP-Rule" id="MF_00281"/>
    </source>
</evidence>
<proteinExistence type="inferred from homology"/>
<accession>Q6G0Y4</accession>
<sequence length="361" mass="41511">MNDIERLEKEICLALEAASDEQTLETVRIAALGKKGCISEKLKALGKMDVEERHKVGPVLNGLKNRVLELWVQKRDLLRRQAMNKRLSRETVDVTLPVRSSPLERGRIHPISQVIEEIIAIYANMGFSLAEGPDIETDYYNFTALNFPEGHPAREMHDTFFFDVDKTGERKLLRTHTSPVQIRTMEKQKAPIRIIIPGKTYRMDSDATHSPMFHQVEGLVIDKTSTIAHMMWLHETFCKAFFEVPSVKMRFRPSFFPFTEPSMEVDIQCDRSGSKVKFGEGQDWLEILGCGMVHPYVLQNVGLDPDVYQGFAWGMGIDRIAMLKYGMPDLRAFFDADLRWLDHYGFRCFDMPAFFPGLRNE</sequence>
<keyword id="KW-0030">Aminoacyl-tRNA synthetase</keyword>
<keyword id="KW-0067">ATP-binding</keyword>
<keyword id="KW-0963">Cytoplasm</keyword>
<keyword id="KW-0436">Ligase</keyword>
<keyword id="KW-0460">Magnesium</keyword>
<keyword id="KW-0479">Metal-binding</keyword>
<keyword id="KW-0547">Nucleotide-binding</keyword>
<keyword id="KW-0648">Protein biosynthesis</keyword>
<name>SYFA_BARQU</name>
<protein>
    <recommendedName>
        <fullName evidence="1">Phenylalanine--tRNA ligase alpha subunit</fullName>
        <ecNumber evidence="1">6.1.1.20</ecNumber>
    </recommendedName>
    <alternativeName>
        <fullName evidence="1">Phenylalanyl-tRNA synthetase alpha subunit</fullName>
        <shortName evidence="1">PheRS</shortName>
    </alternativeName>
</protein>
<dbReference type="EC" id="6.1.1.20" evidence="1"/>
<dbReference type="EMBL" id="BX897700">
    <property type="protein sequence ID" value="CAF25584.1"/>
    <property type="molecule type" value="Genomic_DNA"/>
</dbReference>
<dbReference type="RefSeq" id="WP_011178911.1">
    <property type="nucleotide sequence ID" value="NC_005955.1"/>
</dbReference>
<dbReference type="SMR" id="Q6G0Y4"/>
<dbReference type="KEGG" id="bqu:BQ00770"/>
<dbReference type="eggNOG" id="COG0016">
    <property type="taxonomic scope" value="Bacteria"/>
</dbReference>
<dbReference type="HOGENOM" id="CLU_025086_0_1_5"/>
<dbReference type="OrthoDB" id="9800719at2"/>
<dbReference type="Proteomes" id="UP000000597">
    <property type="component" value="Chromosome"/>
</dbReference>
<dbReference type="GO" id="GO:0005737">
    <property type="term" value="C:cytoplasm"/>
    <property type="evidence" value="ECO:0007669"/>
    <property type="project" value="UniProtKB-SubCell"/>
</dbReference>
<dbReference type="GO" id="GO:0005524">
    <property type="term" value="F:ATP binding"/>
    <property type="evidence" value="ECO:0007669"/>
    <property type="project" value="UniProtKB-UniRule"/>
</dbReference>
<dbReference type="GO" id="GO:0000287">
    <property type="term" value="F:magnesium ion binding"/>
    <property type="evidence" value="ECO:0007669"/>
    <property type="project" value="UniProtKB-UniRule"/>
</dbReference>
<dbReference type="GO" id="GO:0004826">
    <property type="term" value="F:phenylalanine-tRNA ligase activity"/>
    <property type="evidence" value="ECO:0007669"/>
    <property type="project" value="UniProtKB-UniRule"/>
</dbReference>
<dbReference type="GO" id="GO:0000049">
    <property type="term" value="F:tRNA binding"/>
    <property type="evidence" value="ECO:0007669"/>
    <property type="project" value="InterPro"/>
</dbReference>
<dbReference type="GO" id="GO:0006432">
    <property type="term" value="P:phenylalanyl-tRNA aminoacylation"/>
    <property type="evidence" value="ECO:0007669"/>
    <property type="project" value="UniProtKB-UniRule"/>
</dbReference>
<dbReference type="CDD" id="cd00496">
    <property type="entry name" value="PheRS_alpha_core"/>
    <property type="match status" value="1"/>
</dbReference>
<dbReference type="FunFam" id="3.30.930.10:FF:000003">
    <property type="entry name" value="Phenylalanine--tRNA ligase alpha subunit"/>
    <property type="match status" value="1"/>
</dbReference>
<dbReference type="Gene3D" id="3.30.930.10">
    <property type="entry name" value="Bira Bifunctional Protein, Domain 2"/>
    <property type="match status" value="1"/>
</dbReference>
<dbReference type="HAMAP" id="MF_00281">
    <property type="entry name" value="Phe_tRNA_synth_alpha1"/>
    <property type="match status" value="1"/>
</dbReference>
<dbReference type="InterPro" id="IPR006195">
    <property type="entry name" value="aa-tRNA-synth_II"/>
</dbReference>
<dbReference type="InterPro" id="IPR045864">
    <property type="entry name" value="aa-tRNA-synth_II/BPL/LPL"/>
</dbReference>
<dbReference type="InterPro" id="IPR004529">
    <property type="entry name" value="Phe-tRNA-synth_IIc_asu"/>
</dbReference>
<dbReference type="InterPro" id="IPR004188">
    <property type="entry name" value="Phe-tRNA_ligase_II_N"/>
</dbReference>
<dbReference type="InterPro" id="IPR022911">
    <property type="entry name" value="Phe_tRNA_ligase_alpha1_bac"/>
</dbReference>
<dbReference type="InterPro" id="IPR002319">
    <property type="entry name" value="Phenylalanyl-tRNA_Synthase"/>
</dbReference>
<dbReference type="InterPro" id="IPR010978">
    <property type="entry name" value="tRNA-bd_arm"/>
</dbReference>
<dbReference type="NCBIfam" id="TIGR00468">
    <property type="entry name" value="pheS"/>
    <property type="match status" value="1"/>
</dbReference>
<dbReference type="PANTHER" id="PTHR11538:SF41">
    <property type="entry name" value="PHENYLALANINE--TRNA LIGASE, MITOCHONDRIAL"/>
    <property type="match status" value="1"/>
</dbReference>
<dbReference type="PANTHER" id="PTHR11538">
    <property type="entry name" value="PHENYLALANYL-TRNA SYNTHETASE"/>
    <property type="match status" value="1"/>
</dbReference>
<dbReference type="Pfam" id="PF02912">
    <property type="entry name" value="Phe_tRNA-synt_N"/>
    <property type="match status" value="1"/>
</dbReference>
<dbReference type="Pfam" id="PF01409">
    <property type="entry name" value="tRNA-synt_2d"/>
    <property type="match status" value="1"/>
</dbReference>
<dbReference type="SUPFAM" id="SSF55681">
    <property type="entry name" value="Class II aaRS and biotin synthetases"/>
    <property type="match status" value="1"/>
</dbReference>
<dbReference type="SUPFAM" id="SSF46589">
    <property type="entry name" value="tRNA-binding arm"/>
    <property type="match status" value="1"/>
</dbReference>
<dbReference type="PROSITE" id="PS50862">
    <property type="entry name" value="AA_TRNA_LIGASE_II"/>
    <property type="match status" value="1"/>
</dbReference>
<organism>
    <name type="scientific">Bartonella quintana (strain Toulouse)</name>
    <name type="common">Rochalimaea quintana</name>
    <dbReference type="NCBI Taxonomy" id="283165"/>
    <lineage>
        <taxon>Bacteria</taxon>
        <taxon>Pseudomonadati</taxon>
        <taxon>Pseudomonadota</taxon>
        <taxon>Alphaproteobacteria</taxon>
        <taxon>Hyphomicrobiales</taxon>
        <taxon>Bartonellaceae</taxon>
        <taxon>Bartonella</taxon>
    </lineage>
</organism>
<comment type="catalytic activity">
    <reaction evidence="1">
        <text>tRNA(Phe) + L-phenylalanine + ATP = L-phenylalanyl-tRNA(Phe) + AMP + diphosphate + H(+)</text>
        <dbReference type="Rhea" id="RHEA:19413"/>
        <dbReference type="Rhea" id="RHEA-COMP:9668"/>
        <dbReference type="Rhea" id="RHEA-COMP:9699"/>
        <dbReference type="ChEBI" id="CHEBI:15378"/>
        <dbReference type="ChEBI" id="CHEBI:30616"/>
        <dbReference type="ChEBI" id="CHEBI:33019"/>
        <dbReference type="ChEBI" id="CHEBI:58095"/>
        <dbReference type="ChEBI" id="CHEBI:78442"/>
        <dbReference type="ChEBI" id="CHEBI:78531"/>
        <dbReference type="ChEBI" id="CHEBI:456215"/>
        <dbReference type="EC" id="6.1.1.20"/>
    </reaction>
</comment>
<comment type="cofactor">
    <cofactor evidence="1">
        <name>Mg(2+)</name>
        <dbReference type="ChEBI" id="CHEBI:18420"/>
    </cofactor>
    <text evidence="1">Binds 2 magnesium ions per tetramer.</text>
</comment>
<comment type="subunit">
    <text evidence="1">Tetramer of two alpha and two beta subunits.</text>
</comment>
<comment type="subcellular location">
    <subcellularLocation>
        <location evidence="1">Cytoplasm</location>
    </subcellularLocation>
</comment>
<comment type="similarity">
    <text evidence="1">Belongs to the class-II aminoacyl-tRNA synthetase family. Phe-tRNA synthetase alpha subunit type 1 subfamily.</text>
</comment>